<evidence type="ECO:0000255" key="1">
    <source>
        <dbReference type="HAMAP-Rule" id="MF_00859"/>
    </source>
</evidence>
<geneLocation type="chloroplast"/>
<dbReference type="EMBL" id="U38804">
    <property type="protein sequence ID" value="AAC08113.1"/>
    <property type="molecule type" value="Genomic_DNA"/>
</dbReference>
<dbReference type="PIR" id="S73148">
    <property type="entry name" value="S73148"/>
</dbReference>
<dbReference type="RefSeq" id="NP_053837.1">
    <property type="nucleotide sequence ID" value="NC_000925.1"/>
</dbReference>
<dbReference type="SMR" id="P51227"/>
<dbReference type="GeneID" id="809854"/>
<dbReference type="GO" id="GO:0009507">
    <property type="term" value="C:chloroplast"/>
    <property type="evidence" value="ECO:0007669"/>
    <property type="project" value="UniProtKB-SubCell"/>
</dbReference>
<dbReference type="GO" id="GO:0016984">
    <property type="term" value="F:ribulose-bisphosphate carboxylase activity"/>
    <property type="evidence" value="ECO:0007669"/>
    <property type="project" value="UniProtKB-UniRule"/>
</dbReference>
<dbReference type="GO" id="GO:0019253">
    <property type="term" value="P:reductive pentose-phosphate cycle"/>
    <property type="evidence" value="ECO:0007669"/>
    <property type="project" value="UniProtKB-UniRule"/>
</dbReference>
<dbReference type="CDD" id="cd03527">
    <property type="entry name" value="RuBisCO_small"/>
    <property type="match status" value="1"/>
</dbReference>
<dbReference type="Gene3D" id="3.30.190.10">
    <property type="entry name" value="Ribulose bisphosphate carboxylase, small subunit"/>
    <property type="match status" value="1"/>
</dbReference>
<dbReference type="HAMAP" id="MF_00859">
    <property type="entry name" value="RuBisCO_S_bact"/>
    <property type="match status" value="1"/>
</dbReference>
<dbReference type="InterPro" id="IPR024681">
    <property type="entry name" value="RuBisCO_ssu"/>
</dbReference>
<dbReference type="InterPro" id="IPR000894">
    <property type="entry name" value="RuBisCO_ssu_dom"/>
</dbReference>
<dbReference type="InterPro" id="IPR036385">
    <property type="entry name" value="RuBisCO_ssu_sf"/>
</dbReference>
<dbReference type="PANTHER" id="PTHR31262">
    <property type="entry name" value="RIBULOSE BISPHOSPHATE CARBOXYLASE SMALL CHAIN 1, CHLOROPLASTIC"/>
    <property type="match status" value="1"/>
</dbReference>
<dbReference type="PANTHER" id="PTHR31262:SF23">
    <property type="entry name" value="RIBULOSE BISPHOSPHATE CARBOXYLASE SMALL SUBUNIT"/>
    <property type="match status" value="1"/>
</dbReference>
<dbReference type="Pfam" id="PF00101">
    <property type="entry name" value="RuBisCO_small"/>
    <property type="match status" value="1"/>
</dbReference>
<dbReference type="SMART" id="SM00961">
    <property type="entry name" value="RuBisCO_small"/>
    <property type="match status" value="1"/>
</dbReference>
<dbReference type="SUPFAM" id="SSF55239">
    <property type="entry name" value="RuBisCO, small subunit"/>
    <property type="match status" value="1"/>
</dbReference>
<feature type="chain" id="PRO_0000198604" description="Ribulose bisphosphate carboxylase small subunit">
    <location>
        <begin position="1"/>
        <end position="138"/>
    </location>
</feature>
<proteinExistence type="inferred from homology"/>
<accession>P51227</accession>
<gene>
    <name evidence="1" type="primary">rbcS</name>
</gene>
<organism>
    <name type="scientific">Porphyra purpurea</name>
    <name type="common">Red seaweed</name>
    <name type="synonym">Ulva purpurea</name>
    <dbReference type="NCBI Taxonomy" id="2787"/>
    <lineage>
        <taxon>Eukaryota</taxon>
        <taxon>Rhodophyta</taxon>
        <taxon>Bangiophyceae</taxon>
        <taxon>Bangiales</taxon>
        <taxon>Bangiaceae</taxon>
        <taxon>Porphyra</taxon>
    </lineage>
</organism>
<name>RBS_PORPU</name>
<reference key="1">
    <citation type="journal article" date="1995" name="Plant Mol. Biol. Rep.">
        <title>Complete nucleotide sequence of the Porphyra purpurea chloroplast genome.</title>
        <authorList>
            <person name="Reith M.E."/>
            <person name="Munholland J."/>
        </authorList>
    </citation>
    <scope>NUCLEOTIDE SEQUENCE [LARGE SCALE GENOMIC DNA]</scope>
    <source>
        <strain>Avonport</strain>
    </source>
</reference>
<keyword id="KW-0113">Calvin cycle</keyword>
<keyword id="KW-0120">Carbon dioxide fixation</keyword>
<keyword id="KW-0150">Chloroplast</keyword>
<keyword id="KW-0601">Photorespiration</keyword>
<keyword id="KW-0602">Photosynthesis</keyword>
<keyword id="KW-0934">Plastid</keyword>
<comment type="function">
    <text evidence="1">RuBisCO catalyzes two reactions: the carboxylation of D-ribulose 1,5-bisphosphate, the primary event in carbon dioxide fixation, as well as the oxidative fragmentation of the pentose substrate in the photorespiration process. Both reactions occur simultaneously and in competition at the same active site. Although the small subunit is not catalytic it is essential for maximal activity.</text>
</comment>
<comment type="subunit">
    <text evidence="1">Heterohexadecamer of 8 large and 8 small subunits.</text>
</comment>
<comment type="subcellular location">
    <subcellularLocation>
        <location evidence="1">Plastid</location>
        <location evidence="1">Chloroplast</location>
    </subcellularLocation>
</comment>
<comment type="miscellaneous">
    <text>In this alga, in contrast to plants, the small subunit is encoded in the chloroplast.</text>
</comment>
<comment type="miscellaneous">
    <text evidence="1">The basic functional RuBisCO is composed of a large chain homodimer in a 'head-to-tail' conformation. In form I RuBisCO this homodimer is arranged in a barrel-like tetramer with the small subunits forming a tetrameric 'cap' on each end of the 'barrel'.</text>
</comment>
<comment type="similarity">
    <text evidence="1">Belongs to the RuBisCO small chain family.</text>
</comment>
<sequence>MRLTQGAFSFLPDLTDQQINKQLAYIVSKGWSANVEYTDDPHPRNAYWELWGLPLFDVKDPAAVMYEINSCRKAKPSYYVKVNAFDNTRGVESCSMSFIVNRPANEPGFLLQRQDFEGRTMKYTLHSYATEKPEGARY</sequence>
<protein>
    <recommendedName>
        <fullName evidence="1">Ribulose bisphosphate carboxylase small subunit</fullName>
        <shortName evidence="1">RuBisCO small subunit</shortName>
    </recommendedName>
</protein>